<keyword id="KW-0150">Chloroplast</keyword>
<keyword id="KW-0507">mRNA processing</keyword>
<keyword id="KW-0934">Plastid</keyword>
<keyword id="KW-0694">RNA-binding</keyword>
<keyword id="KW-0819">tRNA processing</keyword>
<protein>
    <recommendedName>
        <fullName evidence="1">Maturase K</fullName>
    </recommendedName>
    <alternativeName>
        <fullName evidence="1">Intron maturase</fullName>
    </alternativeName>
</protein>
<dbReference type="EMBL" id="AF144330">
    <property type="protein sequence ID" value="AAG43299.1"/>
    <property type="molecule type" value="Genomic_DNA"/>
</dbReference>
<dbReference type="RefSeq" id="YP_010895412.1">
    <property type="nucleotide sequence ID" value="NC_081109.1"/>
</dbReference>
<dbReference type="GeneID" id="83252942"/>
<dbReference type="GO" id="GO:0009507">
    <property type="term" value="C:chloroplast"/>
    <property type="evidence" value="ECO:0007669"/>
    <property type="project" value="UniProtKB-SubCell"/>
</dbReference>
<dbReference type="GO" id="GO:0003723">
    <property type="term" value="F:RNA binding"/>
    <property type="evidence" value="ECO:0007669"/>
    <property type="project" value="UniProtKB-KW"/>
</dbReference>
<dbReference type="GO" id="GO:0006397">
    <property type="term" value="P:mRNA processing"/>
    <property type="evidence" value="ECO:0007669"/>
    <property type="project" value="UniProtKB-KW"/>
</dbReference>
<dbReference type="GO" id="GO:0008380">
    <property type="term" value="P:RNA splicing"/>
    <property type="evidence" value="ECO:0007669"/>
    <property type="project" value="UniProtKB-UniRule"/>
</dbReference>
<dbReference type="GO" id="GO:0008033">
    <property type="term" value="P:tRNA processing"/>
    <property type="evidence" value="ECO:0007669"/>
    <property type="project" value="UniProtKB-KW"/>
</dbReference>
<dbReference type="HAMAP" id="MF_01390">
    <property type="entry name" value="MatK"/>
    <property type="match status" value="1"/>
</dbReference>
<dbReference type="InterPro" id="IPR024937">
    <property type="entry name" value="Domain_X"/>
</dbReference>
<dbReference type="InterPro" id="IPR002866">
    <property type="entry name" value="Maturase_MatK"/>
</dbReference>
<dbReference type="InterPro" id="IPR024942">
    <property type="entry name" value="Maturase_MatK_N"/>
</dbReference>
<dbReference type="PANTHER" id="PTHR34811">
    <property type="entry name" value="MATURASE K"/>
    <property type="match status" value="1"/>
</dbReference>
<dbReference type="PANTHER" id="PTHR34811:SF1">
    <property type="entry name" value="MATURASE K"/>
    <property type="match status" value="1"/>
</dbReference>
<dbReference type="Pfam" id="PF01348">
    <property type="entry name" value="Intron_maturas2"/>
    <property type="match status" value="1"/>
</dbReference>
<dbReference type="Pfam" id="PF01824">
    <property type="entry name" value="MatK_N"/>
    <property type="match status" value="1"/>
</dbReference>
<evidence type="ECO:0000255" key="1">
    <source>
        <dbReference type="HAMAP-Rule" id="MF_01390"/>
    </source>
</evidence>
<gene>
    <name evidence="1" type="primary">matK</name>
</gene>
<proteinExistence type="inferred from homology"/>
<sequence length="504" mass="60346">MEKFQGYLEFDGARQQSFLYPLFFREYIYVLAYDHGLNRLNRNRSILFENVDYEKKYSSLIVKRLILRMYEQNRLIIPTKNLNQNYFFGHTSLFYYQMISVLFAVIVEIPFSLRLGSSFEGKQLKKSYNLQSIHSIFPFLEDKLSHFNYVLDVVIPYPIHLEILVQTLRYRVKDASSLHFFRFCLYEYCNWKDFSIKKKSILNPRFFLFLYNSHVCEYESIFFFLRKRSSHLRSTSYEVLFERILFYGKIQHFFKVFVKNFPAILGLLKDPLIHYVRYHGRCILATKDTPLLMNKWKYYFVNLWQCYFSVWFQSQKVNINQLSKDNLEFLGYLSSLRLNPLVVRSQMLENSFLIDNVRIKLDSKIPISSIIGSLAKDKFCNVLGHPISKAVWTDSSDSDILNRFVRISRNISHYYSGSSKKKNLYRIKYILRLCCVKTLARKHKSTVRAFLKRLGSGLLEEFLTGEDQVLSLIFPRSYYASKRLYRVRIWYLDILYLNDLVNHE</sequence>
<name>MATK_BARVU</name>
<geneLocation type="chloroplast"/>
<organism>
    <name type="scientific">Barbarea vulgaris</name>
    <name type="common">Yellow rocket</name>
    <name type="synonym">Erysimum barbarea</name>
    <dbReference type="NCBI Taxonomy" id="50459"/>
    <lineage>
        <taxon>Eukaryota</taxon>
        <taxon>Viridiplantae</taxon>
        <taxon>Streptophyta</taxon>
        <taxon>Embryophyta</taxon>
        <taxon>Tracheophyta</taxon>
        <taxon>Spermatophyta</taxon>
        <taxon>Magnoliopsida</taxon>
        <taxon>eudicotyledons</taxon>
        <taxon>Gunneridae</taxon>
        <taxon>Pentapetalae</taxon>
        <taxon>rosids</taxon>
        <taxon>malvids</taxon>
        <taxon>Brassicales</taxon>
        <taxon>Brassicaceae</taxon>
        <taxon>Cardamineae</taxon>
        <taxon>Barbarea</taxon>
    </lineage>
</organism>
<accession>Q9GF62</accession>
<comment type="function">
    <text evidence="1">Usually encoded in the trnK tRNA gene intron. Probably assists in splicing its own and other chloroplast group II introns.</text>
</comment>
<comment type="subcellular location">
    <subcellularLocation>
        <location>Plastid</location>
        <location>Chloroplast</location>
    </subcellularLocation>
</comment>
<comment type="similarity">
    <text evidence="1">Belongs to the intron maturase 2 family. MatK subfamily.</text>
</comment>
<reference key="1">
    <citation type="submission" date="1999-04" db="EMBL/GenBank/DDBJ databases">
        <title>Evolutionary analysis of plastidic maturase K and nuclear chalcone synthase and their utility for phylogenetic reconstructions within the Brassicaceae.</title>
        <authorList>
            <person name="Koch M."/>
            <person name="Mitchell-Olds T."/>
        </authorList>
    </citation>
    <scope>NUCLEOTIDE SEQUENCE [GENOMIC DNA]</scope>
</reference>
<feature type="chain" id="PRO_0000143276" description="Maturase K">
    <location>
        <begin position="1"/>
        <end position="504"/>
    </location>
</feature>